<gene>
    <name type="primary">Simc1</name>
    <name evidence="1" type="synonym">Pleiad</name>
</gene>
<proteinExistence type="inferred from homology"/>
<organism>
    <name type="scientific">Rattus norvegicus</name>
    <name type="common">Rat</name>
    <dbReference type="NCBI Taxonomy" id="10116"/>
    <lineage>
        <taxon>Eukaryota</taxon>
        <taxon>Metazoa</taxon>
        <taxon>Chordata</taxon>
        <taxon>Craniata</taxon>
        <taxon>Vertebrata</taxon>
        <taxon>Euteleostomi</taxon>
        <taxon>Mammalia</taxon>
        <taxon>Eutheria</taxon>
        <taxon>Euarchontoglires</taxon>
        <taxon>Glires</taxon>
        <taxon>Rodentia</taxon>
        <taxon>Myomorpha</taxon>
        <taxon>Muroidea</taxon>
        <taxon>Muridae</taxon>
        <taxon>Murinae</taxon>
        <taxon>Rattus</taxon>
    </lineage>
</organism>
<protein>
    <recommendedName>
        <fullName>SUMO-interacting motif-containing protein 1</fullName>
    </recommendedName>
    <alternativeName>
        <fullName evidence="1">Platform element for inhibition of autolytic degradation</fullName>
    </alternativeName>
</protein>
<keyword id="KW-0539">Nucleus</keyword>
<keyword id="KW-0646">Protease inhibitor</keyword>
<keyword id="KW-1185">Reference proteome</keyword>
<sequence>MEDFIVISDDSGSESSAGTRSGRARRLRRALSRTPGALPRRTVDFIDLTRETRTRAKDRNGLCVIDLTRSEEENRPIATLDLTLEPVASSQKEPPSLQTCTNLSGKEMIEAQGDRGTQPAAQRVINNDPVDLDLLEENMFEGSRPPTSISQDSVYPPEPNCSSITYKGDLSFLTSLQLSSDVSPFSSTSNNSSSSSNQRTSLPCPQQDVPCQSQGLLCSLQALSYPLRGSPCPPRASSCPPQALSCPPQALSSLSCPSQTVQCQLQALPQPPQEVPCSTQNVPCPQQNIPSTPQDLPWHPRHPLYPSQDTLGLPQDVPGRPQNVSYPQDMTQLQDMPWSLQDMPLSLQDVLQSLQDVPPLLGDVPQSPEVMQLPGYMTQSSRNVIQSSAGVIRSSGGVMQPSGCMMQPSGGVTQSLRSAIQSSGGVMQSSGVTQSLRSVMQSSGGVMQSSGVTQSSGGVTWSLRSVMQSSGCMMQSPGGVMLSAGDMMQSSGGATRSLRSMMQSSGCMMQSPGGVTQSSGSVMQSLRNVIQSSGGVTQSSGGVIQSSSGVPQSLRDRMQSPGSVSQSSGDVIQSPRGASPASGDVIKSQGGMPRSLRDRMQSPGGVPQSSEDVIQSAGGVSPASGDAIQSPGGVSPASGDAMQSSGGVTPSLGDVPQSSGGVSPASGDAMQSPGGVTPSLGDAMQSPGGVSPASGDAMQSPGGVSPSLGDVPQSPGNMLESLGNTPNLSGDVSHVPQELLDLAKGRPKLSLNAVQNRHSPMTISAPSSPSCSANPLSQQSEFSSEKRPWLTVSNSSAREERSLPQSATPGSAQIQGQIAQAGVYNRPCLHRLKYFLRPPVHHLFFQTLIPDKDTRESKGQKLEPIPHRRLRMVTNTIEENFPLGTVQFLMDFVSPQHYPPREIVAHIIQKILLSGSETVDVLKEAYMLLMKIQQLHPANAKTVEWDWKLLTYVMEEEGQTLPGRVLFLRYVVQTLEDDFQQILRRQRQHLQQSIANTVLSCDKQPHNVRDVIKWLVKAVTENALTPPQDETQTSPGPGVLKTSSDHLSPQPNLARNTNQLIVCQLQRMLSIAVEVDRTPTCSSNKIAEMMFGFVLDIPERSQREMFFTTMESHLLRCKVLEIIFLHSCETPTRLPLSLAQALYFLNNSTSLLKCQSDKSQWQTWDELVEHLQFLLSSYQHVLREHLRSSVIDRKDLIIKRIKPKPQQGDDITVVDVEKQIEAFRSRLVHILGEPLVPQLQDKVHLLKLLLFYAADLNPDTEPASER</sequence>
<reference key="1">
    <citation type="journal article" date="2004" name="Nature">
        <title>Genome sequence of the Brown Norway rat yields insights into mammalian evolution.</title>
        <authorList>
            <person name="Gibbs R.A."/>
            <person name="Weinstock G.M."/>
            <person name="Metzker M.L."/>
            <person name="Muzny D.M."/>
            <person name="Sodergren E.J."/>
            <person name="Scherer S."/>
            <person name="Scott G."/>
            <person name="Steffen D."/>
            <person name="Worley K.C."/>
            <person name="Burch P.E."/>
            <person name="Okwuonu G."/>
            <person name="Hines S."/>
            <person name="Lewis L."/>
            <person name="Deramo C."/>
            <person name="Delgado O."/>
            <person name="Dugan-Rocha S."/>
            <person name="Miner G."/>
            <person name="Morgan M."/>
            <person name="Hawes A."/>
            <person name="Gill R."/>
            <person name="Holt R.A."/>
            <person name="Adams M.D."/>
            <person name="Amanatides P.G."/>
            <person name="Baden-Tillson H."/>
            <person name="Barnstead M."/>
            <person name="Chin S."/>
            <person name="Evans C.A."/>
            <person name="Ferriera S."/>
            <person name="Fosler C."/>
            <person name="Glodek A."/>
            <person name="Gu Z."/>
            <person name="Jennings D."/>
            <person name="Kraft C.L."/>
            <person name="Nguyen T."/>
            <person name="Pfannkoch C.M."/>
            <person name="Sitter C."/>
            <person name="Sutton G.G."/>
            <person name="Venter J.C."/>
            <person name="Woodage T."/>
            <person name="Smith D."/>
            <person name="Lee H.-M."/>
            <person name="Gustafson E."/>
            <person name="Cahill P."/>
            <person name="Kana A."/>
            <person name="Doucette-Stamm L."/>
            <person name="Weinstock K."/>
            <person name="Fechtel K."/>
            <person name="Weiss R.B."/>
            <person name="Dunn D.M."/>
            <person name="Green E.D."/>
            <person name="Blakesley R.W."/>
            <person name="Bouffard G.G."/>
            <person name="De Jong P.J."/>
            <person name="Osoegawa K."/>
            <person name="Zhu B."/>
            <person name="Marra M."/>
            <person name="Schein J."/>
            <person name="Bosdet I."/>
            <person name="Fjell C."/>
            <person name="Jones S."/>
            <person name="Krzywinski M."/>
            <person name="Mathewson C."/>
            <person name="Siddiqui A."/>
            <person name="Wye N."/>
            <person name="McPherson J."/>
            <person name="Zhao S."/>
            <person name="Fraser C.M."/>
            <person name="Shetty J."/>
            <person name="Shatsman S."/>
            <person name="Geer K."/>
            <person name="Chen Y."/>
            <person name="Abramzon S."/>
            <person name="Nierman W.C."/>
            <person name="Havlak P.H."/>
            <person name="Chen R."/>
            <person name="Durbin K.J."/>
            <person name="Egan A."/>
            <person name="Ren Y."/>
            <person name="Song X.-Z."/>
            <person name="Li B."/>
            <person name="Liu Y."/>
            <person name="Qin X."/>
            <person name="Cawley S."/>
            <person name="Cooney A.J."/>
            <person name="D'Souza L.M."/>
            <person name="Martin K."/>
            <person name="Wu J.Q."/>
            <person name="Gonzalez-Garay M.L."/>
            <person name="Jackson A.R."/>
            <person name="Kalafus K.J."/>
            <person name="McLeod M.P."/>
            <person name="Milosavljevic A."/>
            <person name="Virk D."/>
            <person name="Volkov A."/>
            <person name="Wheeler D.A."/>
            <person name="Zhang Z."/>
            <person name="Bailey J.A."/>
            <person name="Eichler E.E."/>
            <person name="Tuzun E."/>
            <person name="Birney E."/>
            <person name="Mongin E."/>
            <person name="Ureta-Vidal A."/>
            <person name="Woodwark C."/>
            <person name="Zdobnov E."/>
            <person name="Bork P."/>
            <person name="Suyama M."/>
            <person name="Torrents D."/>
            <person name="Alexandersson M."/>
            <person name="Trask B.J."/>
            <person name="Young J.M."/>
            <person name="Huang H."/>
            <person name="Wang H."/>
            <person name="Xing H."/>
            <person name="Daniels S."/>
            <person name="Gietzen D."/>
            <person name="Schmidt J."/>
            <person name="Stevens K."/>
            <person name="Vitt U."/>
            <person name="Wingrove J."/>
            <person name="Camara F."/>
            <person name="Mar Alba M."/>
            <person name="Abril J.F."/>
            <person name="Guigo R."/>
            <person name="Smit A."/>
            <person name="Dubchak I."/>
            <person name="Rubin E.M."/>
            <person name="Couronne O."/>
            <person name="Poliakov A."/>
            <person name="Huebner N."/>
            <person name="Ganten D."/>
            <person name="Goesele C."/>
            <person name="Hummel O."/>
            <person name="Kreitler T."/>
            <person name="Lee Y.-A."/>
            <person name="Monti J."/>
            <person name="Schulz H."/>
            <person name="Zimdahl H."/>
            <person name="Himmelbauer H."/>
            <person name="Lehrach H."/>
            <person name="Jacob H.J."/>
            <person name="Bromberg S."/>
            <person name="Gullings-Handley J."/>
            <person name="Jensen-Seaman M.I."/>
            <person name="Kwitek A.E."/>
            <person name="Lazar J."/>
            <person name="Pasko D."/>
            <person name="Tonellato P.J."/>
            <person name="Twigger S."/>
            <person name="Ponting C.P."/>
            <person name="Duarte J.M."/>
            <person name="Rice S."/>
            <person name="Goodstadt L."/>
            <person name="Beatson S.A."/>
            <person name="Emes R.D."/>
            <person name="Winter E.E."/>
            <person name="Webber C."/>
            <person name="Brandt P."/>
            <person name="Nyakatura G."/>
            <person name="Adetobi M."/>
            <person name="Chiaromonte F."/>
            <person name="Elnitski L."/>
            <person name="Eswara P."/>
            <person name="Hardison R.C."/>
            <person name="Hou M."/>
            <person name="Kolbe D."/>
            <person name="Makova K."/>
            <person name="Miller W."/>
            <person name="Nekrutenko A."/>
            <person name="Riemer C."/>
            <person name="Schwartz S."/>
            <person name="Taylor J."/>
            <person name="Yang S."/>
            <person name="Zhang Y."/>
            <person name="Lindpaintner K."/>
            <person name="Andrews T.D."/>
            <person name="Caccamo M."/>
            <person name="Clamp M."/>
            <person name="Clarke L."/>
            <person name="Curwen V."/>
            <person name="Durbin R.M."/>
            <person name="Eyras E."/>
            <person name="Searle S.M."/>
            <person name="Cooper G.M."/>
            <person name="Batzoglou S."/>
            <person name="Brudno M."/>
            <person name="Sidow A."/>
            <person name="Stone E.A."/>
            <person name="Payseur B.A."/>
            <person name="Bourque G."/>
            <person name="Lopez-Otin C."/>
            <person name="Puente X.S."/>
            <person name="Chakrabarti K."/>
            <person name="Chatterji S."/>
            <person name="Dewey C."/>
            <person name="Pachter L."/>
            <person name="Bray N."/>
            <person name="Yap V.B."/>
            <person name="Caspi A."/>
            <person name="Tesler G."/>
            <person name="Pevzner P.A."/>
            <person name="Haussler D."/>
            <person name="Roskin K.M."/>
            <person name="Baertsch R."/>
            <person name="Clawson H."/>
            <person name="Furey T.S."/>
            <person name="Hinrichs A.S."/>
            <person name="Karolchik D."/>
            <person name="Kent W.J."/>
            <person name="Rosenbloom K.R."/>
            <person name="Trumbower H."/>
            <person name="Weirauch M."/>
            <person name="Cooper D.N."/>
            <person name="Stenson P.D."/>
            <person name="Ma B."/>
            <person name="Brent M."/>
            <person name="Arumugam M."/>
            <person name="Shteynberg D."/>
            <person name="Copley R.R."/>
            <person name="Taylor M.S."/>
            <person name="Riethman H."/>
            <person name="Mudunuri U."/>
            <person name="Peterson J."/>
            <person name="Guyer M."/>
            <person name="Felsenfeld A."/>
            <person name="Old S."/>
            <person name="Mockrin S."/>
            <person name="Collins F.S."/>
        </authorList>
    </citation>
    <scope>NUCLEOTIDE SEQUENCE [LARGE SCALE GENOMIC DNA]</scope>
    <source>
        <strain>Brown Norway</strain>
    </source>
</reference>
<feature type="chain" id="PRO_0000451960" description="SUMO-interacting motif-containing protein 1">
    <location>
        <begin position="1"/>
        <end position="1266"/>
    </location>
</feature>
<feature type="region of interest" description="Disordered" evidence="2">
    <location>
        <begin position="1"/>
        <end position="35"/>
    </location>
</feature>
<feature type="region of interest" description="Disordered" evidence="2">
    <location>
        <begin position="183"/>
        <end position="206"/>
    </location>
</feature>
<feature type="region of interest" description="Disordered" evidence="2">
    <location>
        <begin position="532"/>
        <end position="732"/>
    </location>
</feature>
<feature type="region of interest" description="Disordered" evidence="2">
    <location>
        <begin position="756"/>
        <end position="812"/>
    </location>
</feature>
<feature type="region of interest" description="Interaction with SLF2" evidence="1">
    <location>
        <begin position="779"/>
        <end position="1266"/>
    </location>
</feature>
<feature type="region of interest" description="Required for inhibition of CAPN3 protease activity" evidence="1">
    <location>
        <begin position="857"/>
        <end position="1266"/>
    </location>
</feature>
<feature type="region of interest" description="NSE5-like domain" evidence="1">
    <location>
        <begin position="865"/>
        <end position="1200"/>
    </location>
</feature>
<feature type="region of interest" description="Disordered" evidence="2">
    <location>
        <begin position="1024"/>
        <end position="1052"/>
    </location>
</feature>
<feature type="short sequence motif" description="SUMO interaction motif 1 (SIM); mediates the binding to polysumoylated substrates" evidence="1">
    <location>
        <begin position="45"/>
        <end position="49"/>
    </location>
</feature>
<feature type="short sequence motif" description="SUMO interaction motif 2 (SIM); mediates the binding to polysumoylated substrates" evidence="1">
    <location>
        <begin position="64"/>
        <end position="68"/>
    </location>
</feature>
<feature type="compositionally biased region" description="Basic residues" evidence="2">
    <location>
        <begin position="22"/>
        <end position="31"/>
    </location>
</feature>
<feature type="compositionally biased region" description="Low complexity" evidence="2">
    <location>
        <begin position="183"/>
        <end position="197"/>
    </location>
</feature>
<feature type="compositionally biased region" description="Low complexity" evidence="2">
    <location>
        <begin position="532"/>
        <end position="553"/>
    </location>
</feature>
<feature type="compositionally biased region" description="Polar residues" evidence="2">
    <location>
        <begin position="560"/>
        <end position="571"/>
    </location>
</feature>
<feature type="compositionally biased region" description="Low complexity" evidence="2">
    <location>
        <begin position="764"/>
        <end position="777"/>
    </location>
</feature>
<accession>F1LWT0</accession>
<dbReference type="EMBL" id="AABR07027009">
    <property type="status" value="NOT_ANNOTATED_CDS"/>
    <property type="molecule type" value="Genomic_DNA"/>
</dbReference>
<dbReference type="EMBL" id="AABR07027010">
    <property type="status" value="NOT_ANNOTATED_CDS"/>
    <property type="molecule type" value="Genomic_DNA"/>
</dbReference>
<dbReference type="SMR" id="F1LWT0"/>
<dbReference type="FunCoup" id="F1LWT0">
    <property type="interactions" value="310"/>
</dbReference>
<dbReference type="STRING" id="10116.ENSRNOP00000060156"/>
<dbReference type="GlyGen" id="F1LWT0">
    <property type="glycosylation" value="3 sites"/>
</dbReference>
<dbReference type="PhosphoSitePlus" id="F1LWT0"/>
<dbReference type="PaxDb" id="10116-ENSRNOP00000060156"/>
<dbReference type="AGR" id="RGD:2319689"/>
<dbReference type="RGD" id="2319689">
    <property type="gene designation" value="Simc1"/>
</dbReference>
<dbReference type="VEuPathDB" id="HostDB:ENSRNOG00000016932"/>
<dbReference type="eggNOG" id="ENOG502RR6K">
    <property type="taxonomic scope" value="Eukaryota"/>
</dbReference>
<dbReference type="HOGENOM" id="CLU_264356_0_0_1"/>
<dbReference type="InParanoid" id="F1LWT0"/>
<dbReference type="TreeFam" id="TF332523"/>
<dbReference type="PRO" id="PR:F1LWT0"/>
<dbReference type="Proteomes" id="UP000002494">
    <property type="component" value="Chromosome 17"/>
</dbReference>
<dbReference type="Bgee" id="ENSRNOG00000016932">
    <property type="expression patterns" value="Expressed in testis and 19 other cell types or tissues"/>
</dbReference>
<dbReference type="ExpressionAtlas" id="F1LWT0">
    <property type="expression patterns" value="baseline and differential"/>
</dbReference>
<dbReference type="GO" id="GO:0005737">
    <property type="term" value="C:cytoplasm"/>
    <property type="evidence" value="ECO:0000250"/>
    <property type="project" value="UniProtKB"/>
</dbReference>
<dbReference type="GO" id="GO:0016605">
    <property type="term" value="C:PML body"/>
    <property type="evidence" value="ECO:0000266"/>
    <property type="project" value="RGD"/>
</dbReference>
<dbReference type="GO" id="GO:0030017">
    <property type="term" value="C:sarcomere"/>
    <property type="evidence" value="ECO:0000250"/>
    <property type="project" value="UniProtKB"/>
</dbReference>
<dbReference type="GO" id="GO:0030414">
    <property type="term" value="F:peptidase inhibitor activity"/>
    <property type="evidence" value="ECO:0000250"/>
    <property type="project" value="UniProtKB"/>
</dbReference>
<dbReference type="GO" id="GO:0032184">
    <property type="term" value="F:SUMO polymer binding"/>
    <property type="evidence" value="ECO:0000266"/>
    <property type="project" value="RGD"/>
</dbReference>
<dbReference type="InterPro" id="IPR052119">
    <property type="entry name" value="ElonginBC-PRC2_ViralRestrict"/>
</dbReference>
<dbReference type="PANTHER" id="PTHR23187">
    <property type="entry name" value="FLJ44216 PROTEIN-RELATED"/>
    <property type="match status" value="1"/>
</dbReference>
<dbReference type="PANTHER" id="PTHR23187:SF3">
    <property type="entry name" value="SUMO-INTERACTING MOTIF-CONTAINING PROTEIN 1"/>
    <property type="match status" value="1"/>
</dbReference>
<evidence type="ECO:0000250" key="1">
    <source>
        <dbReference type="UniProtKB" id="Q8NDZ2"/>
    </source>
</evidence>
<evidence type="ECO:0000256" key="2">
    <source>
        <dbReference type="SAM" id="MobiDB-lite"/>
    </source>
</evidence>
<name>SIMC1_RAT</name>
<comment type="function">
    <text evidence="1">Inhibits the protease activity of CAPN3. May play a role in SMC5-SMC6 complex recruitment for viral restriction. Forms a complex with SLF2 and this complex is required to recruit SMC5-SMC6 complex to PML nuclear bodies and sites of viral replication.</text>
</comment>
<comment type="subunit">
    <text evidence="1">Forms a heterodimer with SLF2. Interacts (via SIM domains) with SUMO1 and SUMO2. Interacts with CAPN3 and CTBP1. Interacts with SMC6 and ZNF451.</text>
</comment>
<comment type="subcellular location">
    <subcellularLocation>
        <location evidence="1">Nucleus</location>
        <location evidence="1">PML body</location>
    </subcellularLocation>
</comment>